<proteinExistence type="uncertain"/>
<dbReference type="EMBL" id="M35034">
    <property type="protein sequence ID" value="AAA24628.1"/>
    <property type="molecule type" value="Genomic_DNA"/>
</dbReference>
<dbReference type="EMBL" id="X55034">
    <property type="protein sequence ID" value="CAA38856.1"/>
    <property type="molecule type" value="Genomic_DNA"/>
</dbReference>
<dbReference type="EMBL" id="U00096">
    <property type="status" value="NOT_ANNOTATED_CDS"/>
    <property type="molecule type" value="Genomic_DNA"/>
</dbReference>
<dbReference type="PIR" id="JU0297">
    <property type="entry name" value="JU0297"/>
</dbReference>
<dbReference type="RefSeq" id="WP_001303787.1">
    <property type="nucleotide sequence ID" value="NZ_STEB01000010.1"/>
</dbReference>
<dbReference type="FunCoup" id="P0ADF0">
    <property type="interactions" value="12"/>
</dbReference>
<dbReference type="PATRIC" id="fig|83333.103.peg.826"/>
<dbReference type="EchoBASE" id="EB4307"/>
<dbReference type="InParanoid" id="P0ADF0"/>
<dbReference type="Proteomes" id="UP000000625">
    <property type="component" value="Chromosome"/>
</dbReference>
<accession>P0ADF0</accession>
<accession>P22183</accession>
<reference key="1">
    <citation type="journal article" date="1990" name="J. Bacteriol.">
        <title>Molecular cloning, nucleotide sequence, and expression of shl, a new gene in the 2-minute region of the genetic map of Escherichia coli.</title>
        <authorList>
            <person name="Leclerc G."/>
            <person name="Noel G."/>
            <person name="Drapeau G.R."/>
        </authorList>
    </citation>
    <scope>NUCLEOTIDE SEQUENCE [GENOMIC DNA]</scope>
</reference>
<reference key="2">
    <citation type="journal article" date="1991" name="Mol. Gen. Genet.">
        <title>Nucleotide sequence of the ilvH-fruR gene region of Escherichia coli K12 and Salmonella typhimurium LT2.</title>
        <authorList>
            <person name="Jahreis K."/>
            <person name="Postma P.W."/>
            <person name="Lengeler J.W."/>
        </authorList>
    </citation>
    <scope>NUCLEOTIDE SEQUENCE [GENOMIC DNA]</scope>
    <source>
        <strain>K12</strain>
    </source>
</reference>
<reference key="3">
    <citation type="journal article" date="1997" name="Science">
        <title>The complete genome sequence of Escherichia coli K-12.</title>
        <authorList>
            <person name="Blattner F.R."/>
            <person name="Plunkett G. III"/>
            <person name="Bloch C.A."/>
            <person name="Perna N.T."/>
            <person name="Burland V."/>
            <person name="Riley M."/>
            <person name="Collado-Vides J."/>
            <person name="Glasner J.D."/>
            <person name="Rode C.K."/>
            <person name="Mayhew G.F."/>
            <person name="Gregor J."/>
            <person name="Davis N.W."/>
            <person name="Kirkpatrick H.A."/>
            <person name="Goeden M.A."/>
            <person name="Rose D.J."/>
            <person name="Mau B."/>
            <person name="Shao Y."/>
        </authorList>
    </citation>
    <scope>NUCLEOTIDE SEQUENCE [LARGE SCALE GENOMIC DNA]</scope>
    <source>
        <strain>K12 / MG1655 / ATCC 47076</strain>
    </source>
</reference>
<gene>
    <name type="primary">fruL</name>
    <name type="ordered locus">b0079</name>
</gene>
<name>LPFS_ECOLI</name>
<feature type="peptide" id="PRO_0000044610" description="Putative fruR/shl operon leader peptide">
    <location>
        <begin position="1"/>
        <end position="28"/>
    </location>
</feature>
<keyword id="KW-1185">Reference proteome</keyword>
<sequence length="28" mass="3291">MRNLQPNMSRWAFFAKSVGTWNKSSCRS</sequence>
<protein>
    <recommendedName>
        <fullName>Putative fruR/shl operon leader peptide</fullName>
    </recommendedName>
</protein>
<comment type="caution">
    <text evidence="1">Could be the product of a pseudogene.</text>
</comment>
<organism>
    <name type="scientific">Escherichia coli (strain K12)</name>
    <dbReference type="NCBI Taxonomy" id="83333"/>
    <lineage>
        <taxon>Bacteria</taxon>
        <taxon>Pseudomonadati</taxon>
        <taxon>Pseudomonadota</taxon>
        <taxon>Gammaproteobacteria</taxon>
        <taxon>Enterobacterales</taxon>
        <taxon>Enterobacteriaceae</taxon>
        <taxon>Escherichia</taxon>
    </lineage>
</organism>
<evidence type="ECO:0000305" key="1"/>